<dbReference type="EC" id="3.5.4.2" evidence="1"/>
<dbReference type="EMBL" id="AL591981">
    <property type="protein sequence ID" value="CAC99820.1"/>
    <property type="molecule type" value="Genomic_DNA"/>
</dbReference>
<dbReference type="PIR" id="AF1292">
    <property type="entry name" value="AF1292"/>
</dbReference>
<dbReference type="RefSeq" id="NP_465267.1">
    <property type="nucleotide sequence ID" value="NC_003210.1"/>
</dbReference>
<dbReference type="RefSeq" id="WP_010989802.1">
    <property type="nucleotide sequence ID" value="NZ_CP149495.1"/>
</dbReference>
<dbReference type="SMR" id="Q8Y6E5"/>
<dbReference type="STRING" id="169963.gene:17594424"/>
<dbReference type="PaxDb" id="169963-lmo1742"/>
<dbReference type="EnsemblBacteria" id="CAC99820">
    <property type="protein sequence ID" value="CAC99820"/>
    <property type="gene ID" value="CAC99820"/>
</dbReference>
<dbReference type="GeneID" id="985560"/>
<dbReference type="KEGG" id="lmo:lmo1742"/>
<dbReference type="PATRIC" id="fig|169963.11.peg.1785"/>
<dbReference type="eggNOG" id="COG1001">
    <property type="taxonomic scope" value="Bacteria"/>
</dbReference>
<dbReference type="HOGENOM" id="CLU_027935_0_0_9"/>
<dbReference type="OrthoDB" id="9775607at2"/>
<dbReference type="PhylomeDB" id="Q8Y6E5"/>
<dbReference type="BioCyc" id="LMON169963:LMO1742-MONOMER"/>
<dbReference type="Proteomes" id="UP000000817">
    <property type="component" value="Chromosome"/>
</dbReference>
<dbReference type="GO" id="GO:0000034">
    <property type="term" value="F:adenine deaminase activity"/>
    <property type="evidence" value="ECO:0000318"/>
    <property type="project" value="GO_Central"/>
</dbReference>
<dbReference type="GO" id="GO:0006146">
    <property type="term" value="P:adenine catabolic process"/>
    <property type="evidence" value="ECO:0007669"/>
    <property type="project" value="InterPro"/>
</dbReference>
<dbReference type="CDD" id="cd01295">
    <property type="entry name" value="AdeC"/>
    <property type="match status" value="1"/>
</dbReference>
<dbReference type="FunFam" id="3.20.20.140:FF:000016">
    <property type="entry name" value="Adenine deaminase"/>
    <property type="match status" value="1"/>
</dbReference>
<dbReference type="Gene3D" id="3.20.20.140">
    <property type="entry name" value="Metal-dependent hydrolases"/>
    <property type="match status" value="1"/>
</dbReference>
<dbReference type="Gene3D" id="2.30.40.10">
    <property type="entry name" value="Urease, subunit C, domain 1"/>
    <property type="match status" value="1"/>
</dbReference>
<dbReference type="HAMAP" id="MF_01518">
    <property type="entry name" value="Adenine_deamin"/>
    <property type="match status" value="1"/>
</dbReference>
<dbReference type="InterPro" id="IPR006679">
    <property type="entry name" value="Adenine_deam"/>
</dbReference>
<dbReference type="InterPro" id="IPR026912">
    <property type="entry name" value="Adenine_deam_C"/>
</dbReference>
<dbReference type="InterPro" id="IPR006680">
    <property type="entry name" value="Amidohydro-rel"/>
</dbReference>
<dbReference type="InterPro" id="IPR011059">
    <property type="entry name" value="Metal-dep_hydrolase_composite"/>
</dbReference>
<dbReference type="InterPro" id="IPR032466">
    <property type="entry name" value="Metal_Hydrolase"/>
</dbReference>
<dbReference type="NCBIfam" id="TIGR01178">
    <property type="entry name" value="ade"/>
    <property type="match status" value="1"/>
</dbReference>
<dbReference type="PANTHER" id="PTHR11113:SF2">
    <property type="entry name" value="ADENINE DEAMINASE"/>
    <property type="match status" value="1"/>
</dbReference>
<dbReference type="PANTHER" id="PTHR11113">
    <property type="entry name" value="N-ACETYLGLUCOSAMINE-6-PHOSPHATE DEACETYLASE"/>
    <property type="match status" value="1"/>
</dbReference>
<dbReference type="Pfam" id="PF13382">
    <property type="entry name" value="Adenine_deam_C"/>
    <property type="match status" value="1"/>
</dbReference>
<dbReference type="Pfam" id="PF01979">
    <property type="entry name" value="Amidohydro_1"/>
    <property type="match status" value="1"/>
</dbReference>
<dbReference type="SUPFAM" id="SSF51338">
    <property type="entry name" value="Composite domain of metallo-dependent hydrolases"/>
    <property type="match status" value="1"/>
</dbReference>
<dbReference type="SUPFAM" id="SSF51556">
    <property type="entry name" value="Metallo-dependent hydrolases"/>
    <property type="match status" value="1"/>
</dbReference>
<accession>Q8Y6E5</accession>
<gene>
    <name evidence="1" type="primary">ade</name>
    <name type="synonym">adeC</name>
    <name type="ordered locus">lmo1742</name>
</gene>
<organism>
    <name type="scientific">Listeria monocytogenes serovar 1/2a (strain ATCC BAA-679 / EGD-e)</name>
    <dbReference type="NCBI Taxonomy" id="169963"/>
    <lineage>
        <taxon>Bacteria</taxon>
        <taxon>Bacillati</taxon>
        <taxon>Bacillota</taxon>
        <taxon>Bacilli</taxon>
        <taxon>Bacillales</taxon>
        <taxon>Listeriaceae</taxon>
        <taxon>Listeria</taxon>
    </lineage>
</organism>
<reference key="1">
    <citation type="journal article" date="2001" name="Science">
        <title>Comparative genomics of Listeria species.</title>
        <authorList>
            <person name="Glaser P."/>
            <person name="Frangeul L."/>
            <person name="Buchrieser C."/>
            <person name="Rusniok C."/>
            <person name="Amend A."/>
            <person name="Baquero F."/>
            <person name="Berche P."/>
            <person name="Bloecker H."/>
            <person name="Brandt P."/>
            <person name="Chakraborty T."/>
            <person name="Charbit A."/>
            <person name="Chetouani F."/>
            <person name="Couve E."/>
            <person name="de Daruvar A."/>
            <person name="Dehoux P."/>
            <person name="Domann E."/>
            <person name="Dominguez-Bernal G."/>
            <person name="Duchaud E."/>
            <person name="Durant L."/>
            <person name="Dussurget O."/>
            <person name="Entian K.-D."/>
            <person name="Fsihi H."/>
            <person name="Garcia-del Portillo F."/>
            <person name="Garrido P."/>
            <person name="Gautier L."/>
            <person name="Goebel W."/>
            <person name="Gomez-Lopez N."/>
            <person name="Hain T."/>
            <person name="Hauf J."/>
            <person name="Jackson D."/>
            <person name="Jones L.-M."/>
            <person name="Kaerst U."/>
            <person name="Kreft J."/>
            <person name="Kuhn M."/>
            <person name="Kunst F."/>
            <person name="Kurapkat G."/>
            <person name="Madueno E."/>
            <person name="Maitournam A."/>
            <person name="Mata Vicente J."/>
            <person name="Ng E."/>
            <person name="Nedjari H."/>
            <person name="Nordsiek G."/>
            <person name="Novella S."/>
            <person name="de Pablos B."/>
            <person name="Perez-Diaz J.-C."/>
            <person name="Purcell R."/>
            <person name="Remmel B."/>
            <person name="Rose M."/>
            <person name="Schlueter T."/>
            <person name="Simoes N."/>
            <person name="Tierrez A."/>
            <person name="Vazquez-Boland J.-A."/>
            <person name="Voss H."/>
            <person name="Wehland J."/>
            <person name="Cossart P."/>
        </authorList>
    </citation>
    <scope>NUCLEOTIDE SEQUENCE [LARGE SCALE GENOMIC DNA]</scope>
    <source>
        <strain>ATCC BAA-679 / EGD-e</strain>
    </source>
</reference>
<name>ADEC_LISMO</name>
<feature type="chain" id="PRO_0000142429" description="Adenine deaminase">
    <location>
        <begin position="1"/>
        <end position="580"/>
    </location>
</feature>
<keyword id="KW-0378">Hydrolase</keyword>
<keyword id="KW-0464">Manganese</keyword>
<keyword id="KW-1185">Reference proteome</keyword>
<evidence type="ECO:0000255" key="1">
    <source>
        <dbReference type="HAMAP-Rule" id="MF_01518"/>
    </source>
</evidence>
<proteinExistence type="inferred from homology"/>
<sequence length="580" mass="62125">MVENLKQLQERVAVSDGRAKADLVIKNGRIINVFSGEIMDGDIAIKNGYIAGIGSFPDAEKIIDAAGAFIAPGFIDAHVHVESAMVTPAEFARVLLPNGVTTIVTDPHEIANVAGEKGIEFMLEDAKGAPLDMFVMLPSSVPATEGEHNGETLHAEKLHPLYRHEKVIGLAEVMDFPSVAKGSDDILRKIIDAKKEGGRIDGHGAGLTSADLNNYLAVGIRTDHESTTAKEATDRLRAGMFVMLREGTVGRDLLQTIPAVSEKNSHRFCFCTDDKLINDLITEGSINYNIKLAIKNGIDPITAIQMATINAANCHNLPYLGAVAAGYQADIVFLTDIETVEISKVLKNGEVVVDNGVRNEAAFKQQAAVPFVSPPINHHVHLQDLALPLTKETCYVIGMQPNSLFTEKRIEQVTIQGGKFVPTVENDLLKMAVVERHHDTGCVGVGIVKGFGLTEGAIATTVAHDSHNIVAVGVSDEAMKAAIDHITQTGGGIAVVNGAGQVLHDLALPIAGLLSDKSYEEVENDLAGLLNAFKQISTANGFDPFLTLSFLTLPVIPELKLTDQGLFDFATFQIISNEVN</sequence>
<comment type="catalytic activity">
    <reaction evidence="1">
        <text>adenine + H2O + H(+) = hypoxanthine + NH4(+)</text>
        <dbReference type="Rhea" id="RHEA:23688"/>
        <dbReference type="ChEBI" id="CHEBI:15377"/>
        <dbReference type="ChEBI" id="CHEBI:15378"/>
        <dbReference type="ChEBI" id="CHEBI:16708"/>
        <dbReference type="ChEBI" id="CHEBI:17368"/>
        <dbReference type="ChEBI" id="CHEBI:28938"/>
        <dbReference type="EC" id="3.5.4.2"/>
    </reaction>
</comment>
<comment type="cofactor">
    <cofactor evidence="1">
        <name>Mn(2+)</name>
        <dbReference type="ChEBI" id="CHEBI:29035"/>
    </cofactor>
</comment>
<comment type="similarity">
    <text evidence="1">Belongs to the metallo-dependent hydrolases superfamily. Adenine deaminase family.</text>
</comment>
<protein>
    <recommendedName>
        <fullName evidence="1">Adenine deaminase</fullName>
        <shortName evidence="1">Adenase</shortName>
        <shortName evidence="1">Adenine aminase</shortName>
        <ecNumber evidence="1">3.5.4.2</ecNumber>
    </recommendedName>
</protein>